<gene>
    <name evidence="1" type="primary">hisH</name>
    <name type="ordered locus">SAB2551c</name>
</gene>
<proteinExistence type="inferred from homology"/>
<sequence length="192" mass="21364">MIVIVDYGLGNISNVKRAIEHLGYEVVVSNKQNIIDQAETIILPGVGHFKDAMSEIKRLNLDAILAKNTDKKMIGICLGMQLMYEHSDEGDASGLGFIPGNISRIQTEYPVPHLGWNNLVSKHPMLNQDVYFVHSYQAPMSENVIAYAQYGTDIPAIVQFNNYIGIQFHPEKSGTYGLQILRQAIQGGFIND</sequence>
<dbReference type="EC" id="4.3.2.10" evidence="1"/>
<dbReference type="EC" id="3.5.1.2" evidence="1"/>
<dbReference type="EMBL" id="AJ938182">
    <property type="protein sequence ID" value="CAI82239.1"/>
    <property type="molecule type" value="Genomic_DNA"/>
</dbReference>
<dbReference type="RefSeq" id="WP_000635613.1">
    <property type="nucleotide sequence ID" value="NC_007622.1"/>
</dbReference>
<dbReference type="SMR" id="Q2YZ69"/>
<dbReference type="KEGG" id="sab:SAB2551c"/>
<dbReference type="HOGENOM" id="CLU_071837_2_2_9"/>
<dbReference type="UniPathway" id="UPA00031">
    <property type="reaction ID" value="UER00010"/>
</dbReference>
<dbReference type="GO" id="GO:0005737">
    <property type="term" value="C:cytoplasm"/>
    <property type="evidence" value="ECO:0007669"/>
    <property type="project" value="UniProtKB-SubCell"/>
</dbReference>
<dbReference type="GO" id="GO:0004359">
    <property type="term" value="F:glutaminase activity"/>
    <property type="evidence" value="ECO:0007669"/>
    <property type="project" value="UniProtKB-EC"/>
</dbReference>
<dbReference type="GO" id="GO:0000107">
    <property type="term" value="F:imidazoleglycerol-phosphate synthase activity"/>
    <property type="evidence" value="ECO:0007669"/>
    <property type="project" value="UniProtKB-UniRule"/>
</dbReference>
<dbReference type="GO" id="GO:0016829">
    <property type="term" value="F:lyase activity"/>
    <property type="evidence" value="ECO:0007669"/>
    <property type="project" value="UniProtKB-KW"/>
</dbReference>
<dbReference type="GO" id="GO:0000105">
    <property type="term" value="P:L-histidine biosynthetic process"/>
    <property type="evidence" value="ECO:0007669"/>
    <property type="project" value="UniProtKB-UniRule"/>
</dbReference>
<dbReference type="CDD" id="cd01748">
    <property type="entry name" value="GATase1_IGP_Synthase"/>
    <property type="match status" value="1"/>
</dbReference>
<dbReference type="Gene3D" id="3.40.50.880">
    <property type="match status" value="1"/>
</dbReference>
<dbReference type="HAMAP" id="MF_00278">
    <property type="entry name" value="HisH"/>
    <property type="match status" value="1"/>
</dbReference>
<dbReference type="InterPro" id="IPR029062">
    <property type="entry name" value="Class_I_gatase-like"/>
</dbReference>
<dbReference type="InterPro" id="IPR017926">
    <property type="entry name" value="GATASE"/>
</dbReference>
<dbReference type="InterPro" id="IPR010139">
    <property type="entry name" value="Imidazole-glycPsynth_HisH"/>
</dbReference>
<dbReference type="NCBIfam" id="TIGR01855">
    <property type="entry name" value="IMP_synth_hisH"/>
    <property type="match status" value="1"/>
</dbReference>
<dbReference type="PANTHER" id="PTHR42701">
    <property type="entry name" value="IMIDAZOLE GLYCEROL PHOSPHATE SYNTHASE SUBUNIT HISH"/>
    <property type="match status" value="1"/>
</dbReference>
<dbReference type="PANTHER" id="PTHR42701:SF1">
    <property type="entry name" value="IMIDAZOLE GLYCEROL PHOSPHATE SYNTHASE SUBUNIT HISH"/>
    <property type="match status" value="1"/>
</dbReference>
<dbReference type="Pfam" id="PF00117">
    <property type="entry name" value="GATase"/>
    <property type="match status" value="1"/>
</dbReference>
<dbReference type="PIRSF" id="PIRSF000495">
    <property type="entry name" value="Amidotransf_hisH"/>
    <property type="match status" value="1"/>
</dbReference>
<dbReference type="SUPFAM" id="SSF52317">
    <property type="entry name" value="Class I glutamine amidotransferase-like"/>
    <property type="match status" value="1"/>
</dbReference>
<dbReference type="PROSITE" id="PS51273">
    <property type="entry name" value="GATASE_TYPE_1"/>
    <property type="match status" value="1"/>
</dbReference>
<accession>Q2YZ69</accession>
<organism>
    <name type="scientific">Staphylococcus aureus (strain bovine RF122 / ET3-1)</name>
    <dbReference type="NCBI Taxonomy" id="273036"/>
    <lineage>
        <taxon>Bacteria</taxon>
        <taxon>Bacillati</taxon>
        <taxon>Bacillota</taxon>
        <taxon>Bacilli</taxon>
        <taxon>Bacillales</taxon>
        <taxon>Staphylococcaceae</taxon>
        <taxon>Staphylococcus</taxon>
    </lineage>
</organism>
<name>HIS5_STAAB</name>
<keyword id="KW-0028">Amino-acid biosynthesis</keyword>
<keyword id="KW-0963">Cytoplasm</keyword>
<keyword id="KW-0315">Glutamine amidotransferase</keyword>
<keyword id="KW-0368">Histidine biosynthesis</keyword>
<keyword id="KW-0378">Hydrolase</keyword>
<keyword id="KW-0456">Lyase</keyword>
<evidence type="ECO:0000255" key="1">
    <source>
        <dbReference type="HAMAP-Rule" id="MF_00278"/>
    </source>
</evidence>
<feature type="chain" id="PRO_0000231761" description="Imidazole glycerol phosphate synthase subunit HisH">
    <location>
        <begin position="1"/>
        <end position="192"/>
    </location>
</feature>
<feature type="domain" description="Glutamine amidotransferase type-1" evidence="1">
    <location>
        <begin position="1"/>
        <end position="192"/>
    </location>
</feature>
<feature type="active site" description="Nucleophile" evidence="1">
    <location>
        <position position="77"/>
    </location>
</feature>
<feature type="active site" evidence="1">
    <location>
        <position position="169"/>
    </location>
</feature>
<feature type="active site" evidence="1">
    <location>
        <position position="171"/>
    </location>
</feature>
<reference key="1">
    <citation type="journal article" date="2007" name="PLoS ONE">
        <title>Molecular correlates of host specialization in Staphylococcus aureus.</title>
        <authorList>
            <person name="Herron-Olson L."/>
            <person name="Fitzgerald J.R."/>
            <person name="Musser J.M."/>
            <person name="Kapur V."/>
        </authorList>
    </citation>
    <scope>NUCLEOTIDE SEQUENCE [LARGE SCALE GENOMIC DNA]</scope>
    <source>
        <strain>bovine RF122 / ET3-1</strain>
    </source>
</reference>
<protein>
    <recommendedName>
        <fullName evidence="1">Imidazole glycerol phosphate synthase subunit HisH</fullName>
        <ecNumber evidence="1">4.3.2.10</ecNumber>
    </recommendedName>
    <alternativeName>
        <fullName evidence="1">IGP synthase glutaminase subunit</fullName>
        <ecNumber evidence="1">3.5.1.2</ecNumber>
    </alternativeName>
    <alternativeName>
        <fullName evidence="1">IGP synthase subunit HisH</fullName>
    </alternativeName>
    <alternativeName>
        <fullName evidence="1">ImGP synthase subunit HisH</fullName>
        <shortName evidence="1">IGPS subunit HisH</shortName>
    </alternativeName>
</protein>
<comment type="function">
    <text evidence="1">IGPS catalyzes the conversion of PRFAR and glutamine to IGP, AICAR and glutamate. The HisH subunit catalyzes the hydrolysis of glutamine to glutamate and ammonia as part of the synthesis of IGP and AICAR. The resulting ammonia molecule is channeled to the active site of HisF.</text>
</comment>
<comment type="catalytic activity">
    <reaction evidence="1">
        <text>5-[(5-phospho-1-deoxy-D-ribulos-1-ylimino)methylamino]-1-(5-phospho-beta-D-ribosyl)imidazole-4-carboxamide + L-glutamine = D-erythro-1-(imidazol-4-yl)glycerol 3-phosphate + 5-amino-1-(5-phospho-beta-D-ribosyl)imidazole-4-carboxamide + L-glutamate + H(+)</text>
        <dbReference type="Rhea" id="RHEA:24793"/>
        <dbReference type="ChEBI" id="CHEBI:15378"/>
        <dbReference type="ChEBI" id="CHEBI:29985"/>
        <dbReference type="ChEBI" id="CHEBI:58278"/>
        <dbReference type="ChEBI" id="CHEBI:58359"/>
        <dbReference type="ChEBI" id="CHEBI:58475"/>
        <dbReference type="ChEBI" id="CHEBI:58525"/>
        <dbReference type="EC" id="4.3.2.10"/>
    </reaction>
</comment>
<comment type="catalytic activity">
    <reaction evidence="1">
        <text>L-glutamine + H2O = L-glutamate + NH4(+)</text>
        <dbReference type="Rhea" id="RHEA:15889"/>
        <dbReference type="ChEBI" id="CHEBI:15377"/>
        <dbReference type="ChEBI" id="CHEBI:28938"/>
        <dbReference type="ChEBI" id="CHEBI:29985"/>
        <dbReference type="ChEBI" id="CHEBI:58359"/>
        <dbReference type="EC" id="3.5.1.2"/>
    </reaction>
</comment>
<comment type="pathway">
    <text evidence="1">Amino-acid biosynthesis; L-histidine biosynthesis; L-histidine from 5-phospho-alpha-D-ribose 1-diphosphate: step 5/9.</text>
</comment>
<comment type="subunit">
    <text evidence="1">Heterodimer of HisH and HisF.</text>
</comment>
<comment type="subcellular location">
    <subcellularLocation>
        <location evidence="1">Cytoplasm</location>
    </subcellularLocation>
</comment>